<reference key="1">
    <citation type="journal article" date="1996" name="Science">
        <title>Complete genome sequence of the methanogenic archaeon, Methanococcus jannaschii.</title>
        <authorList>
            <person name="Bult C.J."/>
            <person name="White O."/>
            <person name="Olsen G.J."/>
            <person name="Zhou L."/>
            <person name="Fleischmann R.D."/>
            <person name="Sutton G.G."/>
            <person name="Blake J.A."/>
            <person name="FitzGerald L.M."/>
            <person name="Clayton R.A."/>
            <person name="Gocayne J.D."/>
            <person name="Kerlavage A.R."/>
            <person name="Dougherty B.A."/>
            <person name="Tomb J.-F."/>
            <person name="Adams M.D."/>
            <person name="Reich C.I."/>
            <person name="Overbeek R."/>
            <person name="Kirkness E.F."/>
            <person name="Weinstock K.G."/>
            <person name="Merrick J.M."/>
            <person name="Glodek A."/>
            <person name="Scott J.L."/>
            <person name="Geoghagen N.S.M."/>
            <person name="Weidman J.F."/>
            <person name="Fuhrmann J.L."/>
            <person name="Nguyen D."/>
            <person name="Utterback T.R."/>
            <person name="Kelley J.M."/>
            <person name="Peterson J.D."/>
            <person name="Sadow P.W."/>
            <person name="Hanna M.C."/>
            <person name="Cotton M.D."/>
            <person name="Roberts K.M."/>
            <person name="Hurst M.A."/>
            <person name="Kaine B.P."/>
            <person name="Borodovsky M."/>
            <person name="Klenk H.-P."/>
            <person name="Fraser C.M."/>
            <person name="Smith H.O."/>
            <person name="Woese C.R."/>
            <person name="Venter J.C."/>
        </authorList>
    </citation>
    <scope>NUCLEOTIDE SEQUENCE [LARGE SCALE GENOMIC DNA]</scope>
    <source>
        <strain>ATCC 43067 / DSM 2661 / JAL-1 / JCM 10045 / NBRC 100440</strain>
    </source>
</reference>
<name>BIOF_METJA</name>
<proteinExistence type="inferred from homology"/>
<dbReference type="EC" id="2.3.1.47"/>
<dbReference type="EMBL" id="L77117">
    <property type="protein sequence ID" value="AAB99305.1"/>
    <property type="molecule type" value="Genomic_DNA"/>
</dbReference>
<dbReference type="PIR" id="A64462">
    <property type="entry name" value="A64462"/>
</dbReference>
<dbReference type="RefSeq" id="WP_010870815.1">
    <property type="nucleotide sequence ID" value="NC_000909.1"/>
</dbReference>
<dbReference type="SMR" id="Q58694"/>
<dbReference type="FunCoup" id="Q58694">
    <property type="interactions" value="156"/>
</dbReference>
<dbReference type="STRING" id="243232.MJ_1298"/>
<dbReference type="PaxDb" id="243232-MJ_1298"/>
<dbReference type="EnsemblBacteria" id="AAB99305">
    <property type="protein sequence ID" value="AAB99305"/>
    <property type="gene ID" value="MJ_1298"/>
</dbReference>
<dbReference type="GeneID" id="1452200"/>
<dbReference type="KEGG" id="mja:MJ_1298"/>
<dbReference type="eggNOG" id="arCOG00113">
    <property type="taxonomic scope" value="Archaea"/>
</dbReference>
<dbReference type="HOGENOM" id="CLU_015846_11_3_2"/>
<dbReference type="InParanoid" id="Q58694"/>
<dbReference type="OrthoDB" id="9071at2157"/>
<dbReference type="PhylomeDB" id="Q58694"/>
<dbReference type="UniPathway" id="UPA00078"/>
<dbReference type="Proteomes" id="UP000000805">
    <property type="component" value="Chromosome"/>
</dbReference>
<dbReference type="GO" id="GO:0008710">
    <property type="term" value="F:8-amino-7-oxononanoate synthase activity"/>
    <property type="evidence" value="ECO:0007669"/>
    <property type="project" value="UniProtKB-EC"/>
</dbReference>
<dbReference type="GO" id="GO:0030170">
    <property type="term" value="F:pyridoxal phosphate binding"/>
    <property type="evidence" value="ECO:0007669"/>
    <property type="project" value="InterPro"/>
</dbReference>
<dbReference type="GO" id="GO:0009102">
    <property type="term" value="P:biotin biosynthetic process"/>
    <property type="evidence" value="ECO:0007669"/>
    <property type="project" value="UniProtKB-UniPathway"/>
</dbReference>
<dbReference type="CDD" id="cd06454">
    <property type="entry name" value="KBL_like"/>
    <property type="match status" value="1"/>
</dbReference>
<dbReference type="Gene3D" id="3.90.1150.10">
    <property type="entry name" value="Aspartate Aminotransferase, domain 1"/>
    <property type="match status" value="1"/>
</dbReference>
<dbReference type="Gene3D" id="3.40.640.10">
    <property type="entry name" value="Type I PLP-dependent aspartate aminotransferase-like (Major domain)"/>
    <property type="match status" value="1"/>
</dbReference>
<dbReference type="InterPro" id="IPR001917">
    <property type="entry name" value="Aminotrans_II_pyridoxalP_BS"/>
</dbReference>
<dbReference type="InterPro" id="IPR004839">
    <property type="entry name" value="Aminotransferase_I/II_large"/>
</dbReference>
<dbReference type="InterPro" id="IPR050087">
    <property type="entry name" value="AON_synthase_class-II"/>
</dbReference>
<dbReference type="InterPro" id="IPR004723">
    <property type="entry name" value="AONS_Archaea/Proteobacteria"/>
</dbReference>
<dbReference type="InterPro" id="IPR015424">
    <property type="entry name" value="PyrdxlP-dep_Trfase"/>
</dbReference>
<dbReference type="InterPro" id="IPR015421">
    <property type="entry name" value="PyrdxlP-dep_Trfase_major"/>
</dbReference>
<dbReference type="InterPro" id="IPR015422">
    <property type="entry name" value="PyrdxlP-dep_Trfase_small"/>
</dbReference>
<dbReference type="NCBIfam" id="TIGR00858">
    <property type="entry name" value="bioF"/>
    <property type="match status" value="1"/>
</dbReference>
<dbReference type="PANTHER" id="PTHR13693:SF77">
    <property type="entry name" value="8-AMINO-7-OXONONANOATE SYNTHASE"/>
    <property type="match status" value="1"/>
</dbReference>
<dbReference type="PANTHER" id="PTHR13693">
    <property type="entry name" value="CLASS II AMINOTRANSFERASE/8-AMINO-7-OXONONANOATE SYNTHASE"/>
    <property type="match status" value="1"/>
</dbReference>
<dbReference type="Pfam" id="PF00155">
    <property type="entry name" value="Aminotran_1_2"/>
    <property type="match status" value="1"/>
</dbReference>
<dbReference type="SUPFAM" id="SSF53383">
    <property type="entry name" value="PLP-dependent transferases"/>
    <property type="match status" value="1"/>
</dbReference>
<dbReference type="PROSITE" id="PS00599">
    <property type="entry name" value="AA_TRANSFER_CLASS_2"/>
    <property type="match status" value="1"/>
</dbReference>
<organism>
    <name type="scientific">Methanocaldococcus jannaschii (strain ATCC 43067 / DSM 2661 / JAL-1 / JCM 10045 / NBRC 100440)</name>
    <name type="common">Methanococcus jannaschii</name>
    <dbReference type="NCBI Taxonomy" id="243232"/>
    <lineage>
        <taxon>Archaea</taxon>
        <taxon>Methanobacteriati</taxon>
        <taxon>Methanobacteriota</taxon>
        <taxon>Methanomada group</taxon>
        <taxon>Methanococci</taxon>
        <taxon>Methanococcales</taxon>
        <taxon>Methanocaldococcaceae</taxon>
        <taxon>Methanocaldococcus</taxon>
    </lineage>
</organism>
<comment type="function">
    <text evidence="1">Catalyzes the decarboxylative condensation of pimeloyl-[acyl-carrier protein] and L-alanine to produce 8-amino-7-oxononanoate (AON), [acyl-carrier protein], and carbon dioxide.</text>
</comment>
<comment type="catalytic activity">
    <reaction>
        <text>6-carboxyhexanoyl-[ACP] + L-alanine + H(+) = (8S)-8-amino-7-oxononanoate + holo-[ACP] + CO2</text>
        <dbReference type="Rhea" id="RHEA:42288"/>
        <dbReference type="Rhea" id="RHEA-COMP:9685"/>
        <dbReference type="Rhea" id="RHEA-COMP:9955"/>
        <dbReference type="ChEBI" id="CHEBI:15378"/>
        <dbReference type="ChEBI" id="CHEBI:16526"/>
        <dbReference type="ChEBI" id="CHEBI:57972"/>
        <dbReference type="ChEBI" id="CHEBI:64479"/>
        <dbReference type="ChEBI" id="CHEBI:78846"/>
        <dbReference type="ChEBI" id="CHEBI:149468"/>
        <dbReference type="EC" id="2.3.1.47"/>
    </reaction>
</comment>
<comment type="cofactor">
    <cofactor evidence="1">
        <name>pyridoxal 5'-phosphate</name>
        <dbReference type="ChEBI" id="CHEBI:597326"/>
    </cofactor>
</comment>
<comment type="pathway">
    <text>Cofactor biosynthesis; biotin biosynthesis.</text>
</comment>
<comment type="subunit">
    <text evidence="1">Homodimer.</text>
</comment>
<comment type="similarity">
    <text evidence="2">Belongs to the class-II pyridoxal-phosphate-dependent aminotransferase family. BioF subfamily.</text>
</comment>
<gene>
    <name type="primary">bioF</name>
    <name type="ordered locus">MJ1298</name>
</gene>
<keyword id="KW-0093">Biotin biosynthesis</keyword>
<keyword id="KW-0663">Pyridoxal phosphate</keyword>
<keyword id="KW-1185">Reference proteome</keyword>
<keyword id="KW-0808">Transferase</keyword>
<sequence>MFREKLRREIEIIKNNGLYRFLRKKDDGVLDFSSNDYLCLSKHPEVIEAVKEGLKYGAGSTGSRLTSGNINHQRLEEKIAEFKETERTLVYSSGYATNVGVISALCKKGDLILSDKLNHASIIDGCKLSKADVLIYNHCDVEHLTNLIEENWGKYNNLFIVTDGVFSMDGDIAPLRDLKKIADEFNAILIIDDAHGTGVLGDGRGTLKHFNLKPSDNIVQIGTLSKAIGGLGGFVCGIEEVVEYLINTSRSFIFSTALPPHVVEGCIKAFEIIEKTDIVKKLQKNIKIANKVFKKYEFIKEDNLTPIYPFIFKEKTMEIAEHLIKNNIFCVGIRYPTVPKGLERIRVSINVGHEKEDFELLCERIKEVYSSD</sequence>
<feature type="chain" id="PRO_0000163820" description="Putative 8-amino-7-oxononanoate synthase">
    <location>
        <begin position="1"/>
        <end position="372"/>
    </location>
</feature>
<feature type="binding site" evidence="1">
    <location>
        <position position="20"/>
    </location>
    <ligand>
        <name>substrate</name>
    </ligand>
</feature>
<feature type="binding site" evidence="1">
    <location>
        <begin position="94"/>
        <end position="95"/>
    </location>
    <ligand>
        <name>pyridoxal 5'-phosphate</name>
        <dbReference type="ChEBI" id="CHEBI:597326"/>
    </ligand>
</feature>
<feature type="binding site" evidence="1">
    <location>
        <position position="119"/>
    </location>
    <ligand>
        <name>substrate</name>
    </ligand>
</feature>
<feature type="binding site" evidence="1">
    <location>
        <position position="167"/>
    </location>
    <ligand>
        <name>pyridoxal 5'-phosphate</name>
        <dbReference type="ChEBI" id="CHEBI:597326"/>
    </ligand>
</feature>
<feature type="binding site" evidence="1">
    <location>
        <begin position="192"/>
        <end position="195"/>
    </location>
    <ligand>
        <name>pyridoxal 5'-phosphate</name>
        <dbReference type="ChEBI" id="CHEBI:597326"/>
    </ligand>
</feature>
<feature type="binding site" evidence="1">
    <location>
        <begin position="223"/>
        <end position="226"/>
    </location>
    <ligand>
        <name>pyridoxal 5'-phosphate</name>
        <dbReference type="ChEBI" id="CHEBI:597326"/>
    </ligand>
</feature>
<feature type="binding site" evidence="1">
    <location>
        <position position="337"/>
    </location>
    <ligand>
        <name>substrate</name>
    </ligand>
</feature>
<feature type="modified residue" description="N6-(pyridoxal phosphate)lysine" evidence="1">
    <location>
        <position position="226"/>
    </location>
</feature>
<accession>Q58694</accession>
<evidence type="ECO:0000250" key="1"/>
<evidence type="ECO:0000305" key="2"/>
<protein>
    <recommendedName>
        <fullName>Putative 8-amino-7-oxononanoate synthase</fullName>
        <shortName>AONS</shortName>
        <ecNumber>2.3.1.47</ecNumber>
    </recommendedName>
    <alternativeName>
        <fullName>7-keto-8-amino-pelargonic acid synthase</fullName>
        <shortName>7-KAP synthase</shortName>
    </alternativeName>
    <alternativeName>
        <fullName>8-amino-7-ketopelargonate synthase</fullName>
    </alternativeName>
</protein>